<dbReference type="EC" id="4.2.1.11" evidence="1"/>
<dbReference type="EMBL" id="CP000422">
    <property type="protein sequence ID" value="ABJ67557.1"/>
    <property type="molecule type" value="Genomic_DNA"/>
</dbReference>
<dbReference type="RefSeq" id="WP_002834064.1">
    <property type="nucleotide sequence ID" value="NC_008525.1"/>
</dbReference>
<dbReference type="SMR" id="Q03GW5"/>
<dbReference type="STRING" id="278197.PEPE_0462"/>
<dbReference type="GeneID" id="33061439"/>
<dbReference type="KEGG" id="ppe:PEPE_0462"/>
<dbReference type="eggNOG" id="COG0148">
    <property type="taxonomic scope" value="Bacteria"/>
</dbReference>
<dbReference type="HOGENOM" id="CLU_031223_2_1_9"/>
<dbReference type="OrthoDB" id="9804716at2"/>
<dbReference type="UniPathway" id="UPA00109">
    <property type="reaction ID" value="UER00187"/>
</dbReference>
<dbReference type="Proteomes" id="UP000000773">
    <property type="component" value="Chromosome"/>
</dbReference>
<dbReference type="GO" id="GO:0009986">
    <property type="term" value="C:cell surface"/>
    <property type="evidence" value="ECO:0007669"/>
    <property type="project" value="UniProtKB-SubCell"/>
</dbReference>
<dbReference type="GO" id="GO:0005576">
    <property type="term" value="C:extracellular region"/>
    <property type="evidence" value="ECO:0007669"/>
    <property type="project" value="UniProtKB-SubCell"/>
</dbReference>
<dbReference type="GO" id="GO:0000015">
    <property type="term" value="C:phosphopyruvate hydratase complex"/>
    <property type="evidence" value="ECO:0007669"/>
    <property type="project" value="InterPro"/>
</dbReference>
<dbReference type="GO" id="GO:0000287">
    <property type="term" value="F:magnesium ion binding"/>
    <property type="evidence" value="ECO:0007669"/>
    <property type="project" value="UniProtKB-UniRule"/>
</dbReference>
<dbReference type="GO" id="GO:0004634">
    <property type="term" value="F:phosphopyruvate hydratase activity"/>
    <property type="evidence" value="ECO:0007669"/>
    <property type="project" value="UniProtKB-UniRule"/>
</dbReference>
<dbReference type="GO" id="GO:0006096">
    <property type="term" value="P:glycolytic process"/>
    <property type="evidence" value="ECO:0007669"/>
    <property type="project" value="UniProtKB-UniRule"/>
</dbReference>
<dbReference type="CDD" id="cd03313">
    <property type="entry name" value="enolase"/>
    <property type="match status" value="1"/>
</dbReference>
<dbReference type="FunFam" id="3.20.20.120:FF:000001">
    <property type="entry name" value="Enolase"/>
    <property type="match status" value="1"/>
</dbReference>
<dbReference type="FunFam" id="3.30.390.10:FF:000001">
    <property type="entry name" value="Enolase"/>
    <property type="match status" value="1"/>
</dbReference>
<dbReference type="Gene3D" id="3.20.20.120">
    <property type="entry name" value="Enolase-like C-terminal domain"/>
    <property type="match status" value="1"/>
</dbReference>
<dbReference type="Gene3D" id="3.30.390.10">
    <property type="entry name" value="Enolase-like, N-terminal domain"/>
    <property type="match status" value="1"/>
</dbReference>
<dbReference type="HAMAP" id="MF_00318">
    <property type="entry name" value="Enolase"/>
    <property type="match status" value="1"/>
</dbReference>
<dbReference type="InterPro" id="IPR000941">
    <property type="entry name" value="Enolase"/>
</dbReference>
<dbReference type="InterPro" id="IPR036849">
    <property type="entry name" value="Enolase-like_C_sf"/>
</dbReference>
<dbReference type="InterPro" id="IPR029017">
    <property type="entry name" value="Enolase-like_N"/>
</dbReference>
<dbReference type="InterPro" id="IPR020810">
    <property type="entry name" value="Enolase_C"/>
</dbReference>
<dbReference type="InterPro" id="IPR020809">
    <property type="entry name" value="Enolase_CS"/>
</dbReference>
<dbReference type="InterPro" id="IPR020811">
    <property type="entry name" value="Enolase_N"/>
</dbReference>
<dbReference type="NCBIfam" id="TIGR01060">
    <property type="entry name" value="eno"/>
    <property type="match status" value="1"/>
</dbReference>
<dbReference type="PANTHER" id="PTHR11902">
    <property type="entry name" value="ENOLASE"/>
    <property type="match status" value="1"/>
</dbReference>
<dbReference type="PANTHER" id="PTHR11902:SF1">
    <property type="entry name" value="ENOLASE"/>
    <property type="match status" value="1"/>
</dbReference>
<dbReference type="Pfam" id="PF00113">
    <property type="entry name" value="Enolase_C"/>
    <property type="match status" value="1"/>
</dbReference>
<dbReference type="Pfam" id="PF03952">
    <property type="entry name" value="Enolase_N"/>
    <property type="match status" value="1"/>
</dbReference>
<dbReference type="PIRSF" id="PIRSF001400">
    <property type="entry name" value="Enolase"/>
    <property type="match status" value="1"/>
</dbReference>
<dbReference type="PRINTS" id="PR00148">
    <property type="entry name" value="ENOLASE"/>
</dbReference>
<dbReference type="SFLD" id="SFLDS00001">
    <property type="entry name" value="Enolase"/>
    <property type="match status" value="1"/>
</dbReference>
<dbReference type="SFLD" id="SFLDF00002">
    <property type="entry name" value="enolase"/>
    <property type="match status" value="1"/>
</dbReference>
<dbReference type="SMART" id="SM01192">
    <property type="entry name" value="Enolase_C"/>
    <property type="match status" value="1"/>
</dbReference>
<dbReference type="SMART" id="SM01193">
    <property type="entry name" value="Enolase_N"/>
    <property type="match status" value="1"/>
</dbReference>
<dbReference type="SUPFAM" id="SSF51604">
    <property type="entry name" value="Enolase C-terminal domain-like"/>
    <property type="match status" value="1"/>
</dbReference>
<dbReference type="SUPFAM" id="SSF54826">
    <property type="entry name" value="Enolase N-terminal domain-like"/>
    <property type="match status" value="1"/>
</dbReference>
<dbReference type="PROSITE" id="PS00164">
    <property type="entry name" value="ENOLASE"/>
    <property type="match status" value="1"/>
</dbReference>
<reference key="1">
    <citation type="journal article" date="2006" name="Proc. Natl. Acad. Sci. U.S.A.">
        <title>Comparative genomics of the lactic acid bacteria.</title>
        <authorList>
            <person name="Makarova K.S."/>
            <person name="Slesarev A."/>
            <person name="Wolf Y.I."/>
            <person name="Sorokin A."/>
            <person name="Mirkin B."/>
            <person name="Koonin E.V."/>
            <person name="Pavlov A."/>
            <person name="Pavlova N."/>
            <person name="Karamychev V."/>
            <person name="Polouchine N."/>
            <person name="Shakhova V."/>
            <person name="Grigoriev I."/>
            <person name="Lou Y."/>
            <person name="Rohksar D."/>
            <person name="Lucas S."/>
            <person name="Huang K."/>
            <person name="Goodstein D.M."/>
            <person name="Hawkins T."/>
            <person name="Plengvidhya V."/>
            <person name="Welker D."/>
            <person name="Hughes J."/>
            <person name="Goh Y."/>
            <person name="Benson A."/>
            <person name="Baldwin K."/>
            <person name="Lee J.-H."/>
            <person name="Diaz-Muniz I."/>
            <person name="Dosti B."/>
            <person name="Smeianov V."/>
            <person name="Wechter W."/>
            <person name="Barabote R."/>
            <person name="Lorca G."/>
            <person name="Altermann E."/>
            <person name="Barrangou R."/>
            <person name="Ganesan B."/>
            <person name="Xie Y."/>
            <person name="Rawsthorne H."/>
            <person name="Tamir D."/>
            <person name="Parker C."/>
            <person name="Breidt F."/>
            <person name="Broadbent J.R."/>
            <person name="Hutkins R."/>
            <person name="O'Sullivan D."/>
            <person name="Steele J."/>
            <person name="Unlu G."/>
            <person name="Saier M.H. Jr."/>
            <person name="Klaenhammer T."/>
            <person name="Richardson P."/>
            <person name="Kozyavkin S."/>
            <person name="Weimer B.C."/>
            <person name="Mills D.A."/>
        </authorList>
    </citation>
    <scope>NUCLEOTIDE SEQUENCE [LARGE SCALE GENOMIC DNA]</scope>
    <source>
        <strain>ATCC 25745 / CCUG 21536 / LMG 10740 / 183-1w</strain>
    </source>
</reference>
<organism>
    <name type="scientific">Pediococcus pentosaceus (strain ATCC 25745 / CCUG 21536 / LMG 10740 / 183-1w)</name>
    <dbReference type="NCBI Taxonomy" id="278197"/>
    <lineage>
        <taxon>Bacteria</taxon>
        <taxon>Bacillati</taxon>
        <taxon>Bacillota</taxon>
        <taxon>Bacilli</taxon>
        <taxon>Lactobacillales</taxon>
        <taxon>Lactobacillaceae</taxon>
        <taxon>Pediococcus</taxon>
    </lineage>
</organism>
<feature type="chain" id="PRO_0000280870" description="Enolase">
    <location>
        <begin position="1"/>
        <end position="440"/>
    </location>
</feature>
<feature type="active site" description="Proton donor" evidence="1">
    <location>
        <position position="205"/>
    </location>
</feature>
<feature type="active site" description="Proton acceptor" evidence="1">
    <location>
        <position position="340"/>
    </location>
</feature>
<feature type="binding site" evidence="1">
    <location>
        <position position="163"/>
    </location>
    <ligand>
        <name>(2R)-2-phosphoglycerate</name>
        <dbReference type="ChEBI" id="CHEBI:58289"/>
    </ligand>
</feature>
<feature type="binding site" evidence="1">
    <location>
        <position position="242"/>
    </location>
    <ligand>
        <name>Mg(2+)</name>
        <dbReference type="ChEBI" id="CHEBI:18420"/>
    </ligand>
</feature>
<feature type="binding site" evidence="1">
    <location>
        <position position="288"/>
    </location>
    <ligand>
        <name>Mg(2+)</name>
        <dbReference type="ChEBI" id="CHEBI:18420"/>
    </ligand>
</feature>
<feature type="binding site" evidence="1">
    <location>
        <position position="315"/>
    </location>
    <ligand>
        <name>Mg(2+)</name>
        <dbReference type="ChEBI" id="CHEBI:18420"/>
    </ligand>
</feature>
<feature type="binding site" evidence="1">
    <location>
        <position position="340"/>
    </location>
    <ligand>
        <name>(2R)-2-phosphoglycerate</name>
        <dbReference type="ChEBI" id="CHEBI:58289"/>
    </ligand>
</feature>
<feature type="binding site" evidence="1">
    <location>
        <position position="369"/>
    </location>
    <ligand>
        <name>(2R)-2-phosphoglycerate</name>
        <dbReference type="ChEBI" id="CHEBI:58289"/>
    </ligand>
</feature>
<feature type="binding site" evidence="1">
    <location>
        <position position="370"/>
    </location>
    <ligand>
        <name>(2R)-2-phosphoglycerate</name>
        <dbReference type="ChEBI" id="CHEBI:58289"/>
    </ligand>
</feature>
<feature type="binding site" evidence="1">
    <location>
        <position position="391"/>
    </location>
    <ligand>
        <name>(2R)-2-phosphoglycerate</name>
        <dbReference type="ChEBI" id="CHEBI:58289"/>
    </ligand>
</feature>
<sequence length="440" mass="47667">MSLITDIYAREVLDSRGNPTVEVEVYTEDGGFGRGIVPSGASTGEHEAVELRDGDKNRFSGKGVEKAVANVNGPISKEIVGFEVTDQIAIDKAMIKLDGTPNKGKLGANAILGVSLAVARAAADELQVPLYNYIGGSNAHVLPTPMMNVINGGAHSENKVDFQEFMIMPVGAPSVKEAIRMGSETFHALKSLLSADGKATSVGDEGGFAPDFANNEEPLQYLIKAIEKAGYKPGKDVAIAVDVAASELWNDEDKKYKLRWSTGEEFTTEEFVKYLEGLVNKYPIISIEDPIDENNWDDWASITKELGKKVQLVGDDFFVTNTEYLAKGIKMGAANAILIKVNQIGTLTETMESIEMAKEAGYTAIVSHRSGETEDTTIADLVVATNAGQIKTGSMSRTDRIAKYNQLMRIEDQLEGVAEYKGINSFYNLSADAREEISNK</sequence>
<accession>Q03GW5</accession>
<gene>
    <name evidence="1" type="primary">eno</name>
    <name type="ordered locus">PEPE_0462</name>
</gene>
<keyword id="KW-0963">Cytoplasm</keyword>
<keyword id="KW-0324">Glycolysis</keyword>
<keyword id="KW-0456">Lyase</keyword>
<keyword id="KW-0460">Magnesium</keyword>
<keyword id="KW-0479">Metal-binding</keyword>
<keyword id="KW-0964">Secreted</keyword>
<proteinExistence type="inferred from homology"/>
<evidence type="ECO:0000255" key="1">
    <source>
        <dbReference type="HAMAP-Rule" id="MF_00318"/>
    </source>
</evidence>
<name>ENO_PEDPA</name>
<protein>
    <recommendedName>
        <fullName evidence="1">Enolase</fullName>
        <ecNumber evidence="1">4.2.1.11</ecNumber>
    </recommendedName>
    <alternativeName>
        <fullName evidence="1">2-phospho-D-glycerate hydro-lyase</fullName>
    </alternativeName>
    <alternativeName>
        <fullName evidence="1">2-phosphoglycerate dehydratase</fullName>
    </alternativeName>
</protein>
<comment type="function">
    <text evidence="1">Catalyzes the reversible conversion of 2-phosphoglycerate (2-PG) into phosphoenolpyruvate (PEP). It is essential for the degradation of carbohydrates via glycolysis.</text>
</comment>
<comment type="catalytic activity">
    <reaction evidence="1">
        <text>(2R)-2-phosphoglycerate = phosphoenolpyruvate + H2O</text>
        <dbReference type="Rhea" id="RHEA:10164"/>
        <dbReference type="ChEBI" id="CHEBI:15377"/>
        <dbReference type="ChEBI" id="CHEBI:58289"/>
        <dbReference type="ChEBI" id="CHEBI:58702"/>
        <dbReference type="EC" id="4.2.1.11"/>
    </reaction>
</comment>
<comment type="cofactor">
    <cofactor evidence="1">
        <name>Mg(2+)</name>
        <dbReference type="ChEBI" id="CHEBI:18420"/>
    </cofactor>
    <text evidence="1">Binds a second Mg(2+) ion via substrate during catalysis.</text>
</comment>
<comment type="pathway">
    <text evidence="1">Carbohydrate degradation; glycolysis; pyruvate from D-glyceraldehyde 3-phosphate: step 4/5.</text>
</comment>
<comment type="subcellular location">
    <subcellularLocation>
        <location evidence="1">Cytoplasm</location>
    </subcellularLocation>
    <subcellularLocation>
        <location evidence="1">Secreted</location>
    </subcellularLocation>
    <subcellularLocation>
        <location evidence="1">Cell surface</location>
    </subcellularLocation>
    <text evidence="1">Fractions of enolase are present in both the cytoplasm and on the cell surface.</text>
</comment>
<comment type="similarity">
    <text evidence="1">Belongs to the enolase family.</text>
</comment>